<reference evidence="7" key="1">
    <citation type="journal article" date="2002" name="Nature">
        <title>The genome sequence of Schizosaccharomyces pombe.</title>
        <authorList>
            <person name="Wood V."/>
            <person name="Gwilliam R."/>
            <person name="Rajandream M.A."/>
            <person name="Lyne M.H."/>
            <person name="Lyne R."/>
            <person name="Stewart A."/>
            <person name="Sgouros J.G."/>
            <person name="Peat N."/>
            <person name="Hayles J."/>
            <person name="Baker S.G."/>
            <person name="Basham D."/>
            <person name="Bowman S."/>
            <person name="Brooks K."/>
            <person name="Brown D."/>
            <person name="Brown S."/>
            <person name="Chillingworth T."/>
            <person name="Churcher C.M."/>
            <person name="Collins M."/>
            <person name="Connor R."/>
            <person name="Cronin A."/>
            <person name="Davis P."/>
            <person name="Feltwell T."/>
            <person name="Fraser A."/>
            <person name="Gentles S."/>
            <person name="Goble A."/>
            <person name="Hamlin N."/>
            <person name="Harris D.E."/>
            <person name="Hidalgo J."/>
            <person name="Hodgson G."/>
            <person name="Holroyd S."/>
            <person name="Hornsby T."/>
            <person name="Howarth S."/>
            <person name="Huckle E.J."/>
            <person name="Hunt S."/>
            <person name="Jagels K."/>
            <person name="James K.D."/>
            <person name="Jones L."/>
            <person name="Jones M."/>
            <person name="Leather S."/>
            <person name="McDonald S."/>
            <person name="McLean J."/>
            <person name="Mooney P."/>
            <person name="Moule S."/>
            <person name="Mungall K.L."/>
            <person name="Murphy L.D."/>
            <person name="Niblett D."/>
            <person name="Odell C."/>
            <person name="Oliver K."/>
            <person name="O'Neil S."/>
            <person name="Pearson D."/>
            <person name="Quail M.A."/>
            <person name="Rabbinowitsch E."/>
            <person name="Rutherford K.M."/>
            <person name="Rutter S."/>
            <person name="Saunders D."/>
            <person name="Seeger K."/>
            <person name="Sharp S."/>
            <person name="Skelton J."/>
            <person name="Simmonds M.N."/>
            <person name="Squares R."/>
            <person name="Squares S."/>
            <person name="Stevens K."/>
            <person name="Taylor K."/>
            <person name="Taylor R.G."/>
            <person name="Tivey A."/>
            <person name="Walsh S.V."/>
            <person name="Warren T."/>
            <person name="Whitehead S."/>
            <person name="Woodward J.R."/>
            <person name="Volckaert G."/>
            <person name="Aert R."/>
            <person name="Robben J."/>
            <person name="Grymonprez B."/>
            <person name="Weltjens I."/>
            <person name="Vanstreels E."/>
            <person name="Rieger M."/>
            <person name="Schaefer M."/>
            <person name="Mueller-Auer S."/>
            <person name="Gabel C."/>
            <person name="Fuchs M."/>
            <person name="Duesterhoeft A."/>
            <person name="Fritzc C."/>
            <person name="Holzer E."/>
            <person name="Moestl D."/>
            <person name="Hilbert H."/>
            <person name="Borzym K."/>
            <person name="Langer I."/>
            <person name="Beck A."/>
            <person name="Lehrach H."/>
            <person name="Reinhardt R."/>
            <person name="Pohl T.M."/>
            <person name="Eger P."/>
            <person name="Zimmermann W."/>
            <person name="Wedler H."/>
            <person name="Wambutt R."/>
            <person name="Purnelle B."/>
            <person name="Goffeau A."/>
            <person name="Cadieu E."/>
            <person name="Dreano S."/>
            <person name="Gloux S."/>
            <person name="Lelaure V."/>
            <person name="Mottier S."/>
            <person name="Galibert F."/>
            <person name="Aves S.J."/>
            <person name="Xiang Z."/>
            <person name="Hunt C."/>
            <person name="Moore K."/>
            <person name="Hurst S.M."/>
            <person name="Lucas M."/>
            <person name="Rochet M."/>
            <person name="Gaillardin C."/>
            <person name="Tallada V.A."/>
            <person name="Garzon A."/>
            <person name="Thode G."/>
            <person name="Daga R.R."/>
            <person name="Cruzado L."/>
            <person name="Jimenez J."/>
            <person name="Sanchez M."/>
            <person name="del Rey F."/>
            <person name="Benito J."/>
            <person name="Dominguez A."/>
            <person name="Revuelta J.L."/>
            <person name="Moreno S."/>
            <person name="Armstrong J."/>
            <person name="Forsburg S.L."/>
            <person name="Cerutti L."/>
            <person name="Lowe T."/>
            <person name="McCombie W.R."/>
            <person name="Paulsen I."/>
            <person name="Potashkin J."/>
            <person name="Shpakovski G.V."/>
            <person name="Ussery D."/>
            <person name="Barrell B.G."/>
            <person name="Nurse P."/>
        </authorList>
    </citation>
    <scope>NUCLEOTIDE SEQUENCE [LARGE SCALE GENOMIC DNA]</scope>
    <source>
        <strain>972 / ATCC 24843</strain>
    </source>
</reference>
<reference evidence="6" key="2">
    <citation type="journal article" date="2006" name="Nat. Biotechnol.">
        <title>ORFeome cloning and global analysis of protein localization in the fission yeast Schizosaccharomyces pombe.</title>
        <authorList>
            <person name="Matsuyama A."/>
            <person name="Arai R."/>
            <person name="Yashiroda Y."/>
            <person name="Shirai A."/>
            <person name="Kamata A."/>
            <person name="Sekido S."/>
            <person name="Kobayashi Y."/>
            <person name="Hashimoto A."/>
            <person name="Hamamoto M."/>
            <person name="Hiraoka Y."/>
            <person name="Horinouchi S."/>
            <person name="Yoshida M."/>
        </authorList>
    </citation>
    <scope>SUBCELLULAR LOCATION [LARGE SCALE ANALYSIS]</scope>
</reference>
<name>THDH_SCHPO</name>
<comment type="catalytic activity">
    <reaction evidence="2">
        <text>L-threonine = 2-oxobutanoate + NH4(+)</text>
        <dbReference type="Rhea" id="RHEA:22108"/>
        <dbReference type="ChEBI" id="CHEBI:16763"/>
        <dbReference type="ChEBI" id="CHEBI:28938"/>
        <dbReference type="ChEBI" id="CHEBI:57926"/>
        <dbReference type="EC" id="4.3.1.19"/>
    </reaction>
</comment>
<comment type="cofactor">
    <cofactor evidence="2">
        <name>pyridoxal 5'-phosphate</name>
        <dbReference type="ChEBI" id="CHEBI:597326"/>
    </cofactor>
</comment>
<comment type="activity regulation">
    <text evidence="2">Isoleucine allosterically inhibits while valine allosterically activates this enzyme.</text>
</comment>
<comment type="pathway">
    <text evidence="2">Amino-acid biosynthesis; L-isoleucine biosynthesis; 2-oxobutanoate from L-threonine: step 1/1.</text>
</comment>
<comment type="subunit">
    <text evidence="2">Homotetramer.</text>
</comment>
<comment type="subcellular location">
    <subcellularLocation>
        <location evidence="2">Mitochondrion</location>
    </subcellularLocation>
    <subcellularLocation>
        <location evidence="5">Cytoplasm</location>
    </subcellularLocation>
</comment>
<comment type="similarity">
    <text evidence="3">Belongs to the serine/threonine dehydratase family.</text>
</comment>
<protein>
    <recommendedName>
        <fullName>Threonine dehydratase, mitochondrial</fullName>
        <ecNumber>4.3.1.19</ecNumber>
    </recommendedName>
    <alternativeName>
        <fullName>Threonine deaminase</fullName>
    </alternativeName>
</protein>
<sequence>MTGTSFYTSVLRLGRLAQQGLKFQSVKHIRPSCFSSFGLQAKRWNSTQQNDSSIDCLEPKLQGIIEDNISPSTAQKEISDIKFNIPKEMLLPDGTPDYLRLTLTSNVYEVIKETPLTKGVVISESTGVPVYLKREDLTPVFSFKIRGAHNKMASLDKQSLKNGVIACSAGNHAQGVAYSARTLGVKATIVMPQNTPEIKWRNVKRLGANVLLHGANFDIAKAECARLAKEQNLEVIHPFDDPYVIAGQGTIGLEILHQIDLRKLDAIYCAVGGGGLIAGIATYVKRIAPHVKVIGVETFDADALKKSLKDKKRVTLKEVGLFADGTAVKLVGEETFRLVSKNIDDVVLVDKDEICAAIKDVFLDTRSVVEPSGAMAVAGMKRYVAKHKPKNPNAAQVCILSGANMDFDRLRFIAERADLGLNKEVFLSVTIPERPGSFEALHNIITPRSITEFSYRYDNDDYANIYTSFVVKDRATELPLILQQISEQNMVAEDISDNELAKTHARYLIGGKSSVSKERLYRLDFPERPGALCKFLRSIKEVCSISLFHYRNCGGDIASVLAGLRVFDGQVEKLHSVLEEIGYNWVDETNNPVYLRYLRK</sequence>
<keyword id="KW-0021">Allosteric enzyme</keyword>
<keyword id="KW-0028">Amino-acid biosynthesis</keyword>
<keyword id="KW-0100">Branched-chain amino acid biosynthesis</keyword>
<keyword id="KW-0963">Cytoplasm</keyword>
<keyword id="KW-0412">Isoleucine biosynthesis</keyword>
<keyword id="KW-0456">Lyase</keyword>
<keyword id="KW-0496">Mitochondrion</keyword>
<keyword id="KW-0663">Pyridoxal phosphate</keyword>
<keyword id="KW-1185">Reference proteome</keyword>
<keyword id="KW-0677">Repeat</keyword>
<keyword id="KW-0809">Transit peptide</keyword>
<dbReference type="EC" id="4.3.1.19"/>
<dbReference type="EMBL" id="CU329671">
    <property type="protein sequence ID" value="CAB37622.1"/>
    <property type="molecule type" value="Genomic_DNA"/>
</dbReference>
<dbReference type="PIR" id="T39516">
    <property type="entry name" value="T39516"/>
</dbReference>
<dbReference type="SMR" id="O94634"/>
<dbReference type="BioGRID" id="276697">
    <property type="interactions" value="1"/>
</dbReference>
<dbReference type="FunCoup" id="O94634">
    <property type="interactions" value="217"/>
</dbReference>
<dbReference type="STRING" id="284812.O94634"/>
<dbReference type="iPTMnet" id="O94634"/>
<dbReference type="PaxDb" id="4896-SPBC1677.03c.1"/>
<dbReference type="EnsemblFungi" id="SPBC1677.03c.1">
    <property type="protein sequence ID" value="SPBC1677.03c.1:pep"/>
    <property type="gene ID" value="SPBC1677.03c"/>
</dbReference>
<dbReference type="KEGG" id="spo:2540162"/>
<dbReference type="PomBase" id="SPBC1677.03c"/>
<dbReference type="VEuPathDB" id="FungiDB:SPBC1677.03c"/>
<dbReference type="eggNOG" id="KOG1250">
    <property type="taxonomic scope" value="Eukaryota"/>
</dbReference>
<dbReference type="HOGENOM" id="CLU_021152_6_0_1"/>
<dbReference type="InParanoid" id="O94634"/>
<dbReference type="OMA" id="TRFEYTK"/>
<dbReference type="PhylomeDB" id="O94634"/>
<dbReference type="UniPathway" id="UPA00047">
    <property type="reaction ID" value="UER00054"/>
</dbReference>
<dbReference type="PRO" id="PR:O94634"/>
<dbReference type="Proteomes" id="UP000002485">
    <property type="component" value="Chromosome II"/>
</dbReference>
<dbReference type="GO" id="GO:0005737">
    <property type="term" value="C:cytoplasm"/>
    <property type="evidence" value="ECO:0007005"/>
    <property type="project" value="PomBase"/>
</dbReference>
<dbReference type="GO" id="GO:0005739">
    <property type="term" value="C:mitochondrion"/>
    <property type="evidence" value="ECO:0000266"/>
    <property type="project" value="PomBase"/>
</dbReference>
<dbReference type="GO" id="GO:0030170">
    <property type="term" value="F:pyridoxal phosphate binding"/>
    <property type="evidence" value="ECO:0007669"/>
    <property type="project" value="InterPro"/>
</dbReference>
<dbReference type="GO" id="GO:0004794">
    <property type="term" value="F:threonine deaminase activity"/>
    <property type="evidence" value="ECO:0000314"/>
    <property type="project" value="PomBase"/>
</dbReference>
<dbReference type="GO" id="GO:0009097">
    <property type="term" value="P:isoleucine biosynthetic process"/>
    <property type="evidence" value="ECO:0000318"/>
    <property type="project" value="GO_Central"/>
</dbReference>
<dbReference type="GO" id="GO:1901705">
    <property type="term" value="P:L-isoleucine biosynthetic process"/>
    <property type="evidence" value="ECO:0000314"/>
    <property type="project" value="PomBase"/>
</dbReference>
<dbReference type="CDD" id="cd04906">
    <property type="entry name" value="ACT_ThrD-I_1"/>
    <property type="match status" value="1"/>
</dbReference>
<dbReference type="CDD" id="cd04907">
    <property type="entry name" value="ACT_ThrD-I_2"/>
    <property type="match status" value="1"/>
</dbReference>
<dbReference type="CDD" id="cd01562">
    <property type="entry name" value="Thr-dehyd"/>
    <property type="match status" value="1"/>
</dbReference>
<dbReference type="FunFam" id="3.40.1020.10:FF:000001">
    <property type="entry name" value="L-threonine dehydratase"/>
    <property type="match status" value="1"/>
</dbReference>
<dbReference type="FunFam" id="3.40.50.1100:FF:000008">
    <property type="entry name" value="L-threonine dehydratase"/>
    <property type="match status" value="1"/>
</dbReference>
<dbReference type="Gene3D" id="3.40.50.1100">
    <property type="match status" value="2"/>
</dbReference>
<dbReference type="Gene3D" id="3.40.1020.10">
    <property type="entry name" value="Biosynthetic Threonine Deaminase, Domain 3"/>
    <property type="match status" value="1"/>
</dbReference>
<dbReference type="InterPro" id="IPR045865">
    <property type="entry name" value="ACT-like_dom_sf"/>
</dbReference>
<dbReference type="InterPro" id="IPR050147">
    <property type="entry name" value="Ser/Thr_Dehydratase"/>
</dbReference>
<dbReference type="InterPro" id="IPR000634">
    <property type="entry name" value="Ser/Thr_deHydtase_PyrdxlP-BS"/>
</dbReference>
<dbReference type="InterPro" id="IPR001721">
    <property type="entry name" value="TD_ACT-like"/>
</dbReference>
<dbReference type="InterPro" id="IPR038110">
    <property type="entry name" value="TD_ACT-like_sf"/>
</dbReference>
<dbReference type="InterPro" id="IPR005787">
    <property type="entry name" value="Thr_deHydtase_biosynth"/>
</dbReference>
<dbReference type="InterPro" id="IPR001926">
    <property type="entry name" value="TrpB-like_PALP"/>
</dbReference>
<dbReference type="InterPro" id="IPR036052">
    <property type="entry name" value="TrpB-like_PALP_sf"/>
</dbReference>
<dbReference type="NCBIfam" id="TIGR01124">
    <property type="entry name" value="ilvA_2Cterm"/>
    <property type="match status" value="1"/>
</dbReference>
<dbReference type="NCBIfam" id="NF006674">
    <property type="entry name" value="PRK09224.1"/>
    <property type="match status" value="1"/>
</dbReference>
<dbReference type="PANTHER" id="PTHR48078:SF11">
    <property type="entry name" value="THREONINE DEHYDRATASE, MITOCHONDRIAL"/>
    <property type="match status" value="1"/>
</dbReference>
<dbReference type="PANTHER" id="PTHR48078">
    <property type="entry name" value="THREONINE DEHYDRATASE, MITOCHONDRIAL-RELATED"/>
    <property type="match status" value="1"/>
</dbReference>
<dbReference type="Pfam" id="PF00291">
    <property type="entry name" value="PALP"/>
    <property type="match status" value="1"/>
</dbReference>
<dbReference type="Pfam" id="PF00585">
    <property type="entry name" value="Thr_dehydrat_C"/>
    <property type="match status" value="2"/>
</dbReference>
<dbReference type="SUPFAM" id="SSF55021">
    <property type="entry name" value="ACT-like"/>
    <property type="match status" value="1"/>
</dbReference>
<dbReference type="SUPFAM" id="SSF53686">
    <property type="entry name" value="Tryptophan synthase beta subunit-like PLP-dependent enzymes"/>
    <property type="match status" value="1"/>
</dbReference>
<dbReference type="PROSITE" id="PS51672">
    <property type="entry name" value="ACT_LIKE"/>
    <property type="match status" value="2"/>
</dbReference>
<dbReference type="PROSITE" id="PS00165">
    <property type="entry name" value="DEHYDRATASE_SER_THR"/>
    <property type="match status" value="1"/>
</dbReference>
<gene>
    <name type="ORF">SPBC1677.03c</name>
</gene>
<proteinExistence type="inferred from homology"/>
<feature type="transit peptide" description="Mitochondrion" evidence="2 3">
    <location>
        <begin position="1"/>
        <end status="unknown"/>
    </location>
</feature>
<feature type="chain" id="PRO_0000314633" description="Threonine dehydratase, mitochondrial">
    <location>
        <begin status="unknown"/>
        <end position="600"/>
    </location>
</feature>
<feature type="domain" description="ACT-like 1" evidence="4">
    <location>
        <begin position="425"/>
        <end position="497"/>
    </location>
</feature>
<feature type="domain" description="ACT-like 2" evidence="4">
    <location>
        <begin position="519"/>
        <end position="590"/>
    </location>
</feature>
<feature type="modified residue" description="N6-(pyridoxal phosphate)lysine" evidence="1">
    <location>
        <position position="144"/>
    </location>
</feature>
<evidence type="ECO:0000250" key="1"/>
<evidence type="ECO:0000250" key="2">
    <source>
        <dbReference type="UniProtKB" id="P00927"/>
    </source>
</evidence>
<evidence type="ECO:0000255" key="3"/>
<evidence type="ECO:0000255" key="4">
    <source>
        <dbReference type="PROSITE-ProRule" id="PRU01008"/>
    </source>
</evidence>
<evidence type="ECO:0000269" key="5">
    <source>
    </source>
</evidence>
<evidence type="ECO:0000305" key="6"/>
<evidence type="ECO:0000312" key="7">
    <source>
        <dbReference type="EMBL" id="CAB37622.1"/>
    </source>
</evidence>
<organism>
    <name type="scientific">Schizosaccharomyces pombe (strain 972 / ATCC 24843)</name>
    <name type="common">Fission yeast</name>
    <dbReference type="NCBI Taxonomy" id="284812"/>
    <lineage>
        <taxon>Eukaryota</taxon>
        <taxon>Fungi</taxon>
        <taxon>Dikarya</taxon>
        <taxon>Ascomycota</taxon>
        <taxon>Taphrinomycotina</taxon>
        <taxon>Schizosaccharomycetes</taxon>
        <taxon>Schizosaccharomycetales</taxon>
        <taxon>Schizosaccharomycetaceae</taxon>
        <taxon>Schizosaccharomyces</taxon>
    </lineage>
</organism>
<accession>O94634</accession>